<organism>
    <name type="scientific">Homo sapiens</name>
    <name type="common">Human</name>
    <dbReference type="NCBI Taxonomy" id="9606"/>
    <lineage>
        <taxon>Eukaryota</taxon>
        <taxon>Metazoa</taxon>
        <taxon>Chordata</taxon>
        <taxon>Craniata</taxon>
        <taxon>Vertebrata</taxon>
        <taxon>Euteleostomi</taxon>
        <taxon>Mammalia</taxon>
        <taxon>Eutheria</taxon>
        <taxon>Euarchontoglires</taxon>
        <taxon>Primates</taxon>
        <taxon>Haplorrhini</taxon>
        <taxon>Catarrhini</taxon>
        <taxon>Hominidae</taxon>
        <taxon>Homo</taxon>
    </lineage>
</organism>
<proteinExistence type="evidence at protein level"/>
<keyword id="KW-0002">3D-structure</keyword>
<keyword id="KW-0025">Alternative splicing</keyword>
<keyword id="KW-0968">Cytoplasmic vesicle</keyword>
<keyword id="KW-1015">Disulfide bond</keyword>
<keyword id="KW-0278">Fertilization</keyword>
<keyword id="KW-0472">Membrane</keyword>
<keyword id="KW-1185">Reference proteome</keyword>
<keyword id="KW-0732">Signal</keyword>
<keyword id="KW-0812">Transmembrane</keyword>
<keyword id="KW-1133">Transmembrane helix</keyword>
<dbReference type="EMBL" id="AY358218">
    <property type="protein sequence ID" value="AAQ88585.1"/>
    <property type="molecule type" value="mRNA"/>
</dbReference>
<dbReference type="EMBL" id="AC026954">
    <property type="status" value="NOT_ANNOTATED_CDS"/>
    <property type="molecule type" value="Genomic_DNA"/>
</dbReference>
<dbReference type="EMBL" id="CH471108">
    <property type="protein sequence ID" value="EAW90205.1"/>
    <property type="molecule type" value="Genomic_DNA"/>
</dbReference>
<dbReference type="EMBL" id="BC040900">
    <property type="protein sequence ID" value="AAH40900.1"/>
    <property type="status" value="ALT_INIT"/>
    <property type="molecule type" value="mRNA"/>
</dbReference>
<dbReference type="EMBL" id="BC107110">
    <property type="protein sequence ID" value="AAI07111.1"/>
    <property type="molecule type" value="mRNA"/>
</dbReference>
<dbReference type="CCDS" id="CCDS32546.1">
    <molecule id="Q3KNT9-2"/>
</dbReference>
<dbReference type="CCDS" id="CCDS82051.1">
    <molecule id="Q3KNT9-1"/>
</dbReference>
<dbReference type="CCDS" id="CCDS82052.1">
    <molecule id="Q3KNT9-3"/>
</dbReference>
<dbReference type="RefSeq" id="NP_001307364.1">
    <molecule id="Q3KNT9-3"/>
    <property type="nucleotide sequence ID" value="NM_001320435.2"/>
</dbReference>
<dbReference type="RefSeq" id="NP_001307365.1">
    <molecule id="Q3KNT9-1"/>
    <property type="nucleotide sequence ID" value="NM_001320436.2"/>
</dbReference>
<dbReference type="RefSeq" id="NP_937797.1">
    <molecule id="Q3KNT9-2"/>
    <property type="nucleotide sequence ID" value="NM_198154.3"/>
</dbReference>
<dbReference type="RefSeq" id="XP_016880057.1">
    <molecule id="Q3KNT9-1"/>
    <property type="nucleotide sequence ID" value="XM_017024568.2"/>
</dbReference>
<dbReference type="RefSeq" id="XP_016880058.1">
    <molecule id="Q3KNT9-1"/>
    <property type="nucleotide sequence ID" value="XM_017024569.2"/>
</dbReference>
<dbReference type="RefSeq" id="XP_054171908.1">
    <molecule id="Q3KNT9-1"/>
    <property type="nucleotide sequence ID" value="XM_054315933.1"/>
</dbReference>
<dbReference type="RefSeq" id="XP_054171909.1">
    <molecule id="Q3KNT9-1"/>
    <property type="nucleotide sequence ID" value="XM_054315934.1"/>
</dbReference>
<dbReference type="RefSeq" id="XP_054188633.1">
    <molecule id="Q3KNT9-1"/>
    <property type="nucleotide sequence ID" value="XM_054332658.1"/>
</dbReference>
<dbReference type="RefSeq" id="XP_054188634.1">
    <molecule id="Q3KNT9-1"/>
    <property type="nucleotide sequence ID" value="XM_054332659.1"/>
</dbReference>
<dbReference type="PDB" id="7UX0">
    <property type="method" value="X-ray"/>
    <property type="resolution" value="1.49 A"/>
    <property type="chains" value="A=17-138"/>
</dbReference>
<dbReference type="PDBsum" id="7UX0"/>
<dbReference type="SMR" id="Q3KNT9"/>
<dbReference type="BioGRID" id="130835">
    <property type="interactions" value="18"/>
</dbReference>
<dbReference type="FunCoup" id="Q3KNT9">
    <property type="interactions" value="11"/>
</dbReference>
<dbReference type="IntAct" id="Q3KNT9">
    <property type="interactions" value="18"/>
</dbReference>
<dbReference type="STRING" id="9606.ENSP00000374632"/>
<dbReference type="iPTMnet" id="Q3KNT9"/>
<dbReference type="PhosphoSitePlus" id="Q3KNT9"/>
<dbReference type="BioMuta" id="TMEM95"/>
<dbReference type="DMDM" id="121942532"/>
<dbReference type="MassIVE" id="Q3KNT9"/>
<dbReference type="PaxDb" id="9606-ENSP00000331466"/>
<dbReference type="PeptideAtlas" id="Q3KNT9"/>
<dbReference type="Antibodypedia" id="76550">
    <property type="antibodies" value="25 antibodies from 5 providers"/>
</dbReference>
<dbReference type="DNASU" id="339168"/>
<dbReference type="Ensembl" id="ENST00000330767.4">
    <molecule id="Q3KNT9-2"/>
    <property type="protein sequence ID" value="ENSP00000331466.4"/>
    <property type="gene ID" value="ENSG00000182896.13"/>
</dbReference>
<dbReference type="Ensembl" id="ENST00000389982.8">
    <molecule id="Q3KNT9-3"/>
    <property type="protein sequence ID" value="ENSP00000374632.4"/>
    <property type="gene ID" value="ENSG00000182896.13"/>
</dbReference>
<dbReference type="Ensembl" id="ENST00000576060.6">
    <molecule id="Q3KNT9-1"/>
    <property type="protein sequence ID" value="ENSP00000460828.1"/>
    <property type="gene ID" value="ENSG00000182896.13"/>
</dbReference>
<dbReference type="Ensembl" id="ENST00000672158.1">
    <molecule id="Q3KNT9-3"/>
    <property type="protein sequence ID" value="ENSP00000500075.1"/>
    <property type="gene ID" value="ENSG00000288511.3"/>
</dbReference>
<dbReference type="Ensembl" id="ENST00000673329.3">
    <molecule id="Q3KNT9-1"/>
    <property type="protein sequence ID" value="ENSP00000500787.1"/>
    <property type="gene ID" value="ENSG00000288511.3"/>
</dbReference>
<dbReference type="Ensembl" id="ENST00000673610.1">
    <molecule id="Q3KNT9-2"/>
    <property type="protein sequence ID" value="ENSP00000500018.1"/>
    <property type="gene ID" value="ENSG00000288511.3"/>
</dbReference>
<dbReference type="GeneID" id="339168"/>
<dbReference type="KEGG" id="hsa:339168"/>
<dbReference type="MANE-Select" id="ENST00000576060.6">
    <property type="protein sequence ID" value="ENSP00000460828.1"/>
    <property type="RefSeq nucleotide sequence ID" value="NM_001320436.2"/>
    <property type="RefSeq protein sequence ID" value="NP_001307365.1"/>
</dbReference>
<dbReference type="UCSC" id="uc002ggf.1">
    <molecule id="Q3KNT9-1"/>
    <property type="organism name" value="human"/>
</dbReference>
<dbReference type="AGR" id="HGNC:27898"/>
<dbReference type="CTD" id="339168"/>
<dbReference type="DisGeNET" id="339168"/>
<dbReference type="GeneCards" id="TMEM95"/>
<dbReference type="HGNC" id="HGNC:27898">
    <property type="gene designation" value="TMEM95"/>
</dbReference>
<dbReference type="HPA" id="ENSG00000182896">
    <property type="expression patterns" value="Tissue enriched (testis)"/>
</dbReference>
<dbReference type="MIM" id="617814">
    <property type="type" value="gene"/>
</dbReference>
<dbReference type="neXtProt" id="NX_Q3KNT9"/>
<dbReference type="OpenTargets" id="ENSG00000182896"/>
<dbReference type="PharmGKB" id="PA142670746"/>
<dbReference type="VEuPathDB" id="HostDB:ENSG00000182896"/>
<dbReference type="eggNOG" id="ENOG502S64R">
    <property type="taxonomic scope" value="Eukaryota"/>
</dbReference>
<dbReference type="GeneTree" id="ENSGT00390000018162"/>
<dbReference type="HOGENOM" id="CLU_1354216_0_0_1"/>
<dbReference type="InParanoid" id="Q3KNT9"/>
<dbReference type="OMA" id="STCEGTE"/>
<dbReference type="OrthoDB" id="9936222at2759"/>
<dbReference type="PAN-GO" id="Q3KNT9">
    <property type="GO annotations" value="2 GO annotations based on evolutionary models"/>
</dbReference>
<dbReference type="PhylomeDB" id="Q3KNT9"/>
<dbReference type="TreeFam" id="TF342122"/>
<dbReference type="PathwayCommons" id="Q3KNT9"/>
<dbReference type="SignaLink" id="Q3KNT9"/>
<dbReference type="BioGRID-ORCS" id="339168">
    <property type="hits" value="14 hits in 1138 CRISPR screens"/>
</dbReference>
<dbReference type="GenomeRNAi" id="339168"/>
<dbReference type="Pharos" id="Q3KNT9">
    <property type="development level" value="Tdark"/>
</dbReference>
<dbReference type="PRO" id="PR:Q3KNT9"/>
<dbReference type="Proteomes" id="UP000005640">
    <property type="component" value="Chromosome 17"/>
</dbReference>
<dbReference type="RNAct" id="Q3KNT9">
    <property type="molecule type" value="protein"/>
</dbReference>
<dbReference type="Bgee" id="ENSG00000182896">
    <property type="expression patterns" value="Expressed in left testis and 36 other cell types or tissues"/>
</dbReference>
<dbReference type="GO" id="GO:0002080">
    <property type="term" value="C:acrosomal membrane"/>
    <property type="evidence" value="ECO:0000250"/>
    <property type="project" value="UniProtKB"/>
</dbReference>
<dbReference type="GO" id="GO:0097524">
    <property type="term" value="C:sperm plasma membrane"/>
    <property type="evidence" value="ECO:0007669"/>
    <property type="project" value="InterPro"/>
</dbReference>
<dbReference type="GO" id="GO:0007342">
    <property type="term" value="P:fusion of sperm to egg plasma membrane involved in single fertilization"/>
    <property type="evidence" value="ECO:0000315"/>
    <property type="project" value="UniProtKB"/>
</dbReference>
<dbReference type="InterPro" id="IPR027984">
    <property type="entry name" value="TMEM95"/>
</dbReference>
<dbReference type="PANTHER" id="PTHR38808:SF1">
    <property type="entry name" value="SPERM-EGG FUSION PROTEIN TMEM95"/>
    <property type="match status" value="1"/>
</dbReference>
<dbReference type="PANTHER" id="PTHR38808">
    <property type="entry name" value="TRANSMEMBRANE PROTEIN 95"/>
    <property type="match status" value="1"/>
</dbReference>
<dbReference type="Pfam" id="PF15203">
    <property type="entry name" value="TMEM95"/>
    <property type="match status" value="1"/>
</dbReference>
<sequence length="176" mass="19597">MWRLALGGVFLAAAQACVFCRLPAHDLSGRLARLCSQMEARQKECGASPDFSAFALDEVSMNKVTEKTHRVLRVMEIKEAVSSLPSYWSWLRKTKLPEYTREALCPPACRGSTTLYNCSTCKGTEVSCWPRKRCFPGSQDLWEAKILLLSIFGAFLLLGVLSLLVESHHLQAKSGL</sequence>
<gene>
    <name evidence="7" type="primary">TMEM95</name>
    <name type="ORF">UNQ9390/PRO34281</name>
</gene>
<protein>
    <recommendedName>
        <fullName evidence="6">Sperm-egg fusion protein TMEM95</fullName>
    </recommendedName>
    <alternativeName>
        <fullName evidence="7">Transmembrane protein 95</fullName>
    </alternativeName>
</protein>
<name>TMM95_HUMAN</name>
<reference key="1">
    <citation type="journal article" date="2003" name="Genome Res.">
        <title>The secreted protein discovery initiative (SPDI), a large-scale effort to identify novel human secreted and transmembrane proteins: a bioinformatics assessment.</title>
        <authorList>
            <person name="Clark H.F."/>
            <person name="Gurney A.L."/>
            <person name="Abaya E."/>
            <person name="Baker K."/>
            <person name="Baldwin D.T."/>
            <person name="Brush J."/>
            <person name="Chen J."/>
            <person name="Chow B."/>
            <person name="Chui C."/>
            <person name="Crowley C."/>
            <person name="Currell B."/>
            <person name="Deuel B."/>
            <person name="Dowd P."/>
            <person name="Eaton D."/>
            <person name="Foster J.S."/>
            <person name="Grimaldi C."/>
            <person name="Gu Q."/>
            <person name="Hass P.E."/>
            <person name="Heldens S."/>
            <person name="Huang A."/>
            <person name="Kim H.S."/>
            <person name="Klimowski L."/>
            <person name="Jin Y."/>
            <person name="Johnson S."/>
            <person name="Lee J."/>
            <person name="Lewis L."/>
            <person name="Liao D."/>
            <person name="Mark M.R."/>
            <person name="Robbie E."/>
            <person name="Sanchez C."/>
            <person name="Schoenfeld J."/>
            <person name="Seshagiri S."/>
            <person name="Simmons L."/>
            <person name="Singh J."/>
            <person name="Smith V."/>
            <person name="Stinson J."/>
            <person name="Vagts A."/>
            <person name="Vandlen R.L."/>
            <person name="Watanabe C."/>
            <person name="Wieand D."/>
            <person name="Woods K."/>
            <person name="Xie M.-H."/>
            <person name="Yansura D.G."/>
            <person name="Yi S."/>
            <person name="Yu G."/>
            <person name="Yuan J."/>
            <person name="Zhang M."/>
            <person name="Zhang Z."/>
            <person name="Goddard A.D."/>
            <person name="Wood W.I."/>
            <person name="Godowski P.J."/>
            <person name="Gray A.M."/>
        </authorList>
    </citation>
    <scope>NUCLEOTIDE SEQUENCE [LARGE SCALE MRNA] (ISOFORM 2)</scope>
</reference>
<reference key="2">
    <citation type="journal article" date="2006" name="Nature">
        <title>DNA sequence of human chromosome 17 and analysis of rearrangement in the human lineage.</title>
        <authorList>
            <person name="Zody M.C."/>
            <person name="Garber M."/>
            <person name="Adams D.J."/>
            <person name="Sharpe T."/>
            <person name="Harrow J."/>
            <person name="Lupski J.R."/>
            <person name="Nicholson C."/>
            <person name="Searle S.M."/>
            <person name="Wilming L."/>
            <person name="Young S.K."/>
            <person name="Abouelleil A."/>
            <person name="Allen N.R."/>
            <person name="Bi W."/>
            <person name="Bloom T."/>
            <person name="Borowsky M.L."/>
            <person name="Bugalter B.E."/>
            <person name="Butler J."/>
            <person name="Chang J.L."/>
            <person name="Chen C.-K."/>
            <person name="Cook A."/>
            <person name="Corum B."/>
            <person name="Cuomo C.A."/>
            <person name="de Jong P.J."/>
            <person name="DeCaprio D."/>
            <person name="Dewar K."/>
            <person name="FitzGerald M."/>
            <person name="Gilbert J."/>
            <person name="Gibson R."/>
            <person name="Gnerre S."/>
            <person name="Goldstein S."/>
            <person name="Grafham D.V."/>
            <person name="Grocock R."/>
            <person name="Hafez N."/>
            <person name="Hagopian D.S."/>
            <person name="Hart E."/>
            <person name="Norman C.H."/>
            <person name="Humphray S."/>
            <person name="Jaffe D.B."/>
            <person name="Jones M."/>
            <person name="Kamal M."/>
            <person name="Khodiyar V.K."/>
            <person name="LaButti K."/>
            <person name="Laird G."/>
            <person name="Lehoczky J."/>
            <person name="Liu X."/>
            <person name="Lokyitsang T."/>
            <person name="Loveland J."/>
            <person name="Lui A."/>
            <person name="Macdonald P."/>
            <person name="Major J.E."/>
            <person name="Matthews L."/>
            <person name="Mauceli E."/>
            <person name="McCarroll S.A."/>
            <person name="Mihalev A.H."/>
            <person name="Mudge J."/>
            <person name="Nguyen C."/>
            <person name="Nicol R."/>
            <person name="O'Leary S.B."/>
            <person name="Osoegawa K."/>
            <person name="Schwartz D.C."/>
            <person name="Shaw-Smith C."/>
            <person name="Stankiewicz P."/>
            <person name="Steward C."/>
            <person name="Swarbreck D."/>
            <person name="Venkataraman V."/>
            <person name="Whittaker C.A."/>
            <person name="Yang X."/>
            <person name="Zimmer A.R."/>
            <person name="Bradley A."/>
            <person name="Hubbard T."/>
            <person name="Birren B.W."/>
            <person name="Rogers J."/>
            <person name="Lander E.S."/>
            <person name="Nusbaum C."/>
        </authorList>
    </citation>
    <scope>NUCLEOTIDE SEQUENCE [LARGE SCALE GENOMIC DNA]</scope>
</reference>
<reference key="3">
    <citation type="submission" date="2005-09" db="EMBL/GenBank/DDBJ databases">
        <authorList>
            <person name="Mural R.J."/>
            <person name="Istrail S."/>
            <person name="Sutton G.G."/>
            <person name="Florea L."/>
            <person name="Halpern A.L."/>
            <person name="Mobarry C.M."/>
            <person name="Lippert R."/>
            <person name="Walenz B."/>
            <person name="Shatkay H."/>
            <person name="Dew I."/>
            <person name="Miller J.R."/>
            <person name="Flanigan M.J."/>
            <person name="Edwards N.J."/>
            <person name="Bolanos R."/>
            <person name="Fasulo D."/>
            <person name="Halldorsson B.V."/>
            <person name="Hannenhalli S."/>
            <person name="Turner R."/>
            <person name="Yooseph S."/>
            <person name="Lu F."/>
            <person name="Nusskern D.R."/>
            <person name="Shue B.C."/>
            <person name="Zheng X.H."/>
            <person name="Zhong F."/>
            <person name="Delcher A.L."/>
            <person name="Huson D.H."/>
            <person name="Kravitz S.A."/>
            <person name="Mouchard L."/>
            <person name="Reinert K."/>
            <person name="Remington K.A."/>
            <person name="Clark A.G."/>
            <person name="Waterman M.S."/>
            <person name="Eichler E.E."/>
            <person name="Adams M.D."/>
            <person name="Hunkapiller M.W."/>
            <person name="Myers E.W."/>
            <person name="Venter J.C."/>
        </authorList>
    </citation>
    <scope>NUCLEOTIDE SEQUENCE [LARGE SCALE GENOMIC DNA]</scope>
</reference>
<reference key="4">
    <citation type="journal article" date="2004" name="Genome Res.">
        <title>The status, quality, and expansion of the NIH full-length cDNA project: the Mammalian Gene Collection (MGC).</title>
        <authorList>
            <consortium name="The MGC Project Team"/>
        </authorList>
    </citation>
    <scope>NUCLEOTIDE SEQUENCE [LARGE SCALE MRNA] (ISOFORMS 1 AND 3)</scope>
    <source>
        <tissue>Brain</tissue>
    </source>
</reference>
<reference evidence="8" key="5">
    <citation type="journal article" date="2022" name="Proc. Natl. Acad. Sci. U.S.A.">
        <title>Human sperm TMEM95 binds eggs and facilitates membrane fusion.</title>
        <authorList>
            <person name="Tang S."/>
            <person name="Lu Y."/>
            <person name="Skinner W.M."/>
            <person name="Sanyal M."/>
            <person name="Lishko P.V."/>
            <person name="Ikawa M."/>
            <person name="Kim P.S."/>
        </authorList>
    </citation>
    <scope>X-RAY CRYSTALLOGRAPHY (1.49 ANGSTROMS) OF 17-138</scope>
    <scope>FUNCTION</scope>
    <scope>GLYCOSYLATION</scope>
    <scope>TISSUE SPECIFICITY</scope>
    <scope>MUTAGENESIS OF ARG-70 AND ARG-73</scope>
    <scope>DISULFIDE BOND</scope>
</reference>
<evidence type="ECO:0000250" key="1">
    <source>
        <dbReference type="UniProtKB" id="P0DJF3"/>
    </source>
</evidence>
<evidence type="ECO:0000255" key="2"/>
<evidence type="ECO:0000269" key="3">
    <source>
    </source>
</evidence>
<evidence type="ECO:0000303" key="4">
    <source>
    </source>
</evidence>
<evidence type="ECO:0000303" key="5">
    <source>
    </source>
</evidence>
<evidence type="ECO:0000305" key="6"/>
<evidence type="ECO:0000312" key="7">
    <source>
        <dbReference type="HGNC" id="HGNC:27898"/>
    </source>
</evidence>
<evidence type="ECO:0007744" key="8">
    <source>
        <dbReference type="PDB" id="7UX0"/>
    </source>
</evidence>
<evidence type="ECO:0007829" key="9">
    <source>
        <dbReference type="PDB" id="7UX0"/>
    </source>
</evidence>
<accession>Q3KNT9</accession>
<accession>B7WPI7</accession>
<accession>Q6UXT3</accession>
<accession>Q8IW68</accession>
<comment type="function">
    <text evidence="3">Sperm protein required for fusion of sperm with the egg membrane during fertilization.</text>
</comment>
<comment type="subunit">
    <text evidence="1">Does not interact with sperm-egg fusion proteins IZUMO1 or IZUMO1R/JUNO.</text>
</comment>
<comment type="interaction">
    <interactant intactId="EBI-12892569">
        <id>Q3KNT9</id>
    </interactant>
    <interactant intactId="EBI-2837444">
        <id>Q8WUW1</id>
        <label>BRK1</label>
    </interactant>
    <organismsDiffer>false</organismsDiffer>
    <experiments>3</experiments>
</comment>
<comment type="interaction">
    <interactant intactId="EBI-12892569">
        <id>Q3KNT9</id>
    </interactant>
    <interactant intactId="EBI-372594">
        <id>Q99828</id>
        <label>CIB1</label>
    </interactant>
    <organismsDiffer>false</organismsDiffer>
    <experiments>3</experiments>
</comment>
<comment type="interaction">
    <interactant intactId="EBI-12892569">
        <id>Q3KNT9</id>
    </interactant>
    <interactant intactId="EBI-745846">
        <id>P57086</id>
        <label>SCAND1</label>
    </interactant>
    <organismsDiffer>false</organismsDiffer>
    <experiments>3</experiments>
</comment>
<comment type="subcellular location">
    <subcellularLocation>
        <location evidence="1">Cytoplasmic vesicle</location>
        <location evidence="1">Secretory vesicle</location>
        <location evidence="1">Acrosome membrane</location>
        <topology evidence="6">Single-pass type I membrane protein</topology>
    </subcellularLocation>
    <text evidence="1">Following the acrosome reaction, relocalizes to the equatorial segment.</text>
</comment>
<comment type="alternative products">
    <event type="alternative splicing"/>
    <isoform>
        <id>Q3KNT9-1</id>
        <name>1</name>
        <sequence type="displayed"/>
    </isoform>
    <isoform>
        <id>Q3KNT9-2</id>
        <name>2</name>
        <sequence type="described" ref="VSP_025245"/>
    </isoform>
    <isoform>
        <id>Q3KNT9-3</id>
        <name>3</name>
        <sequence type="described" ref="VSP_025246"/>
    </isoform>
</comment>
<comment type="tissue specificity">
    <text evidence="3">Spermatozoa (at protein level).</text>
</comment>
<comment type="PTM">
    <text evidence="3">N-glycosylated.</text>
</comment>
<comment type="similarity">
    <text evidence="6">Belongs to the TMEM95 family.</text>
</comment>
<comment type="sequence caution" evidence="6">
    <conflict type="erroneous initiation">
        <sequence resource="EMBL-CDS" id="AAH40900"/>
    </conflict>
    <text>Extended N-terminus.</text>
</comment>
<feature type="signal peptide" evidence="2">
    <location>
        <begin position="1"/>
        <end position="16"/>
    </location>
</feature>
<feature type="chain" id="PRO_0000286970" description="Sperm-egg fusion protein TMEM95">
    <location>
        <begin position="17"/>
        <end position="176"/>
    </location>
</feature>
<feature type="topological domain" description="Extracellular" evidence="2">
    <location>
        <begin position="17"/>
        <end position="145"/>
    </location>
</feature>
<feature type="transmembrane region" description="Helical" evidence="2">
    <location>
        <begin position="146"/>
        <end position="166"/>
    </location>
</feature>
<feature type="topological domain" description="Cytoplasmic" evidence="2">
    <location>
        <begin position="167"/>
        <end position="176"/>
    </location>
</feature>
<feature type="disulfide bond" evidence="3 8">
    <location>
        <begin position="17"/>
        <end position="118"/>
    </location>
</feature>
<feature type="disulfide bond" evidence="3 8">
    <location>
        <begin position="20"/>
        <end position="121"/>
    </location>
</feature>
<feature type="disulfide bond" evidence="3 8">
    <location>
        <begin position="105"/>
        <end position="128"/>
    </location>
</feature>
<feature type="disulfide bond" evidence="3 8">
    <location>
        <begin position="109"/>
        <end position="134"/>
    </location>
</feature>
<feature type="splice variant" id="VSP_025245" description="In isoform 2." evidence="4">
    <original>R</original>
    <variation>PLPLLSPAG</variation>
    <location>
        <position position="110"/>
    </location>
</feature>
<feature type="splice variant" id="VSP_025246" description="In isoform 3." evidence="5">
    <original>QDLWEAKILLLSIFGAFLLLGVLSLLVESHHLQAKSGL</original>
    <variation>LGSQDSAPLHLRSFPASGCSEPPGGVPPPPSKKWLVKTLKTSQPPALRGMHSQLPHPLEGNQSAP</variation>
    <location>
        <begin position="139"/>
        <end position="176"/>
    </location>
</feature>
<feature type="mutagenesis site" description="Significant loss of sperm-binding to hamster egg membrane." evidence="3">
    <original>R</original>
    <variation>A</variation>
    <location>
        <position position="70"/>
    </location>
</feature>
<feature type="mutagenesis site" description="Significant loss of sperm-binding to hamster egg membrane." evidence="3">
    <original>R</original>
    <variation>A</variation>
    <location>
        <position position="73"/>
    </location>
</feature>
<feature type="helix" evidence="9">
    <location>
        <begin position="23"/>
        <end position="25"/>
    </location>
</feature>
<feature type="helix" evidence="9">
    <location>
        <begin position="27"/>
        <end position="35"/>
    </location>
</feature>
<feature type="helix" evidence="9">
    <location>
        <begin position="58"/>
        <end position="78"/>
    </location>
</feature>
<feature type="helix" evidence="9">
    <location>
        <begin position="84"/>
        <end position="93"/>
    </location>
</feature>
<feature type="helix" evidence="9">
    <location>
        <begin position="95"/>
        <end position="104"/>
    </location>
</feature>
<feature type="turn" evidence="9">
    <location>
        <begin position="106"/>
        <end position="108"/>
    </location>
</feature>
<feature type="strand" evidence="9">
    <location>
        <begin position="110"/>
        <end position="117"/>
    </location>
</feature>
<feature type="turn" evidence="9">
    <location>
        <begin position="118"/>
        <end position="120"/>
    </location>
</feature>
<feature type="strand" evidence="9">
    <location>
        <begin position="123"/>
        <end position="127"/>
    </location>
</feature>
<feature type="helix" evidence="9">
    <location>
        <begin position="131"/>
        <end position="134"/>
    </location>
</feature>